<reference key="1">
    <citation type="journal article" date="2005" name="Science">
        <title>The genome of the basidiomycetous yeast and human pathogen Cryptococcus neoformans.</title>
        <authorList>
            <person name="Loftus B.J."/>
            <person name="Fung E."/>
            <person name="Roncaglia P."/>
            <person name="Rowley D."/>
            <person name="Amedeo P."/>
            <person name="Bruno D."/>
            <person name="Vamathevan J."/>
            <person name="Miranda M."/>
            <person name="Anderson I.J."/>
            <person name="Fraser J.A."/>
            <person name="Allen J.E."/>
            <person name="Bosdet I.E."/>
            <person name="Brent M.R."/>
            <person name="Chiu R."/>
            <person name="Doering T.L."/>
            <person name="Donlin M.J."/>
            <person name="D'Souza C.A."/>
            <person name="Fox D.S."/>
            <person name="Grinberg V."/>
            <person name="Fu J."/>
            <person name="Fukushima M."/>
            <person name="Haas B.J."/>
            <person name="Huang J.C."/>
            <person name="Janbon G."/>
            <person name="Jones S.J.M."/>
            <person name="Koo H.L."/>
            <person name="Krzywinski M.I."/>
            <person name="Kwon-Chung K.J."/>
            <person name="Lengeler K.B."/>
            <person name="Maiti R."/>
            <person name="Marra M.A."/>
            <person name="Marra R.E."/>
            <person name="Mathewson C.A."/>
            <person name="Mitchell T.G."/>
            <person name="Pertea M."/>
            <person name="Riggs F.R."/>
            <person name="Salzberg S.L."/>
            <person name="Schein J.E."/>
            <person name="Shvartsbeyn A."/>
            <person name="Shin H."/>
            <person name="Shumway M."/>
            <person name="Specht C.A."/>
            <person name="Suh B.B."/>
            <person name="Tenney A."/>
            <person name="Utterback T.R."/>
            <person name="Wickes B.L."/>
            <person name="Wortman J.R."/>
            <person name="Wye N.H."/>
            <person name="Kronstad J.W."/>
            <person name="Lodge J.K."/>
            <person name="Heitman J."/>
            <person name="Davis R.W."/>
            <person name="Fraser C.M."/>
            <person name="Hyman R.W."/>
        </authorList>
    </citation>
    <scope>NUCLEOTIDE SEQUENCE [LARGE SCALE GENOMIC DNA]</scope>
    <source>
        <strain>B-3501A</strain>
    </source>
</reference>
<protein>
    <recommendedName>
        <fullName evidence="5">ATP-dependent rRNA helicase SPB4</fullName>
        <ecNumber evidence="1">3.6.4.13</ecNumber>
    </recommendedName>
</protein>
<sequence length="748" mass="84251">MDAPVPAAPAFGGSWAKLNPPLSPWILDVINSMGFKNMTPVQAGTIPRAVKNQDCVVEAVTGSGKTLAFTIPVLERLSRREEPYKKGEIAAIVVAPTRELATQIHAVFHHFLSSLIPPESEEETGDVEAHAPPFASSSRSPSPQTPDKPLFPLPMLVTSGTPTPYETFQSTHPSILIGTPGRLAAFLLNPRGLAIVRVSELDVLVLDEADRLLSSPDHRRDVERIMRHLPKQRRTHLFSATMTDAVEEMIGLGLRNPVRIVVNLKDKRKDGEEPKERRTPMALQNTYLVCRHAEKTLQLIRLLLCESTKHERSKFIVYFSTCAAVDYFYRILSRLPSLSKFHLTSFHGELPPKIRETALSTFTSHPSSHLSPAVLLCTDVAARGVDFLDIDVVIQYDAPTDPKTFSHRAGRTARAGRRGKAVVLLGKGREEDYVGTFQSANAELMKRKRQKAQRSILDFLNIRKIPLTKQPYINAYLEEVDTPQALDPEATTLLHSIRQIILTDRELSDKAAKSFVSAFRAYSKHEASFIFRTLDFDFNSQAISFGLLRLPAMPEIKDWKKKKEAERQRLEKIKSEGGEVEEKEIIEWEDAGVNWDTFAYASRQREAARLATLAQRADNQSSNDAARAEARAKRKIKAEMREAWSEQKERKVRKEERKEKKDAKKKYEWELEQANGEGDRQSDLANIAKAQAERKKRREREEESWDEEIGKEYKSLKREIKEEKSVKESSKGGAGGGGIGGGMFDDLE</sequence>
<gene>
    <name evidence="1" type="primary">SPB4</name>
    <name type="ordered locus">CNBL2730</name>
</gene>
<organism>
    <name type="scientific">Cryptococcus neoformans var. neoformans serotype D (strain B-3501A)</name>
    <name type="common">Filobasidiella neoformans</name>
    <dbReference type="NCBI Taxonomy" id="283643"/>
    <lineage>
        <taxon>Eukaryota</taxon>
        <taxon>Fungi</taxon>
        <taxon>Dikarya</taxon>
        <taxon>Basidiomycota</taxon>
        <taxon>Agaricomycotina</taxon>
        <taxon>Tremellomycetes</taxon>
        <taxon>Tremellales</taxon>
        <taxon>Cryptococcaceae</taxon>
        <taxon>Cryptococcus</taxon>
        <taxon>Cryptococcus neoformans species complex</taxon>
    </lineage>
</organism>
<comment type="function">
    <text evidence="1">ATP-binding RNA helicase involved in the biogenesis of 60S ribosomal subunits. Binds 90S pre-ribosomal particles and dissociates from pre-60S ribosomal particles after processing of 27SB pre-rRNA. Required for the normal formation of 18S rRNA through the processing of pre-rRNAs at sites A0, A1 and A2, and the normal formation of 25S and 5.8S rRNAs through the processing of pre-rRNAs at sites C1 and C2.</text>
</comment>
<comment type="catalytic activity">
    <reaction evidence="1">
        <text>ATP + H2O = ADP + phosphate + H(+)</text>
        <dbReference type="Rhea" id="RHEA:13065"/>
        <dbReference type="ChEBI" id="CHEBI:15377"/>
        <dbReference type="ChEBI" id="CHEBI:15378"/>
        <dbReference type="ChEBI" id="CHEBI:30616"/>
        <dbReference type="ChEBI" id="CHEBI:43474"/>
        <dbReference type="ChEBI" id="CHEBI:456216"/>
        <dbReference type="EC" id="3.6.4.13"/>
    </reaction>
</comment>
<comment type="subunit">
    <text evidence="1">Component of pre-60S ribosomal complexes.</text>
</comment>
<comment type="subcellular location">
    <subcellularLocation>
        <location evidence="1">Nucleus</location>
        <location evidence="1">Nucleolus</location>
    </subcellularLocation>
</comment>
<comment type="domain">
    <text>The Q motif is unique to and characteristic of the DEAD box family of RNA helicases and controls ATP binding and hydrolysis.</text>
</comment>
<comment type="similarity">
    <text evidence="5">Belongs to the DEAD box helicase family. DDX55/SPB4 subfamily.</text>
</comment>
<proteinExistence type="inferred from homology"/>
<name>SPB4_CRYNB</name>
<keyword id="KW-0067">ATP-binding</keyword>
<keyword id="KW-0175">Coiled coil</keyword>
<keyword id="KW-0347">Helicase</keyword>
<keyword id="KW-0378">Hydrolase</keyword>
<keyword id="KW-0547">Nucleotide-binding</keyword>
<keyword id="KW-0539">Nucleus</keyword>
<keyword id="KW-0690">Ribosome biogenesis</keyword>
<keyword id="KW-0694">RNA-binding</keyword>
<keyword id="KW-0698">rRNA processing</keyword>
<accession>P0CR09</accession>
<accession>Q55IR0</accession>
<accession>Q5KCY8</accession>
<feature type="chain" id="PRO_0000410265" description="ATP-dependent rRNA helicase SPB4">
    <location>
        <begin position="1"/>
        <end position="748"/>
    </location>
</feature>
<feature type="domain" description="Helicase ATP-binding" evidence="2">
    <location>
        <begin position="46"/>
        <end position="260"/>
    </location>
</feature>
<feature type="domain" description="Helicase C-terminal" evidence="3">
    <location>
        <begin position="295"/>
        <end position="460"/>
    </location>
</feature>
<feature type="region of interest" description="Disordered" evidence="4">
    <location>
        <begin position="119"/>
        <end position="156"/>
    </location>
</feature>
<feature type="region of interest" description="Disordered" evidence="4">
    <location>
        <begin position="614"/>
        <end position="748"/>
    </location>
</feature>
<feature type="short sequence motif" description="Q motif" evidence="5">
    <location>
        <begin position="15"/>
        <end position="43"/>
    </location>
</feature>
<feature type="short sequence motif" description="DEAD box" evidence="5">
    <location>
        <begin position="207"/>
        <end position="210"/>
    </location>
</feature>
<feature type="compositionally biased region" description="Low complexity" evidence="4">
    <location>
        <begin position="132"/>
        <end position="142"/>
    </location>
</feature>
<feature type="compositionally biased region" description="Pro residues" evidence="4">
    <location>
        <begin position="143"/>
        <end position="152"/>
    </location>
</feature>
<feature type="compositionally biased region" description="Basic and acidic residues" evidence="4">
    <location>
        <begin position="626"/>
        <end position="669"/>
    </location>
</feature>
<feature type="compositionally biased region" description="Basic and acidic residues" evidence="4">
    <location>
        <begin position="708"/>
        <end position="730"/>
    </location>
</feature>
<feature type="compositionally biased region" description="Gly residues" evidence="4">
    <location>
        <begin position="732"/>
        <end position="748"/>
    </location>
</feature>
<feature type="binding site" evidence="2">
    <location>
        <begin position="59"/>
        <end position="66"/>
    </location>
    <ligand>
        <name>ATP</name>
        <dbReference type="ChEBI" id="CHEBI:30616"/>
    </ligand>
</feature>
<dbReference type="EC" id="3.6.4.13" evidence="1"/>
<dbReference type="EMBL" id="AAEY01000057">
    <property type="protein sequence ID" value="EAL17760.1"/>
    <property type="molecule type" value="Genomic_DNA"/>
</dbReference>
<dbReference type="RefSeq" id="XP_772407.1">
    <property type="nucleotide sequence ID" value="XM_767314.1"/>
</dbReference>
<dbReference type="SMR" id="P0CR09"/>
<dbReference type="GeneID" id="4939322"/>
<dbReference type="KEGG" id="cnb:CNBL2730"/>
<dbReference type="VEuPathDB" id="FungiDB:CNBL2730"/>
<dbReference type="HOGENOM" id="CLU_003041_26_4_1"/>
<dbReference type="OrthoDB" id="7510at5206"/>
<dbReference type="GO" id="GO:0030686">
    <property type="term" value="C:90S preribosome"/>
    <property type="evidence" value="ECO:0007669"/>
    <property type="project" value="EnsemblFungi"/>
</dbReference>
<dbReference type="GO" id="GO:0005730">
    <property type="term" value="C:nucleolus"/>
    <property type="evidence" value="ECO:0007669"/>
    <property type="project" value="UniProtKB-SubCell"/>
</dbReference>
<dbReference type="GO" id="GO:0005654">
    <property type="term" value="C:nucleoplasm"/>
    <property type="evidence" value="ECO:0007669"/>
    <property type="project" value="EnsemblFungi"/>
</dbReference>
<dbReference type="GO" id="GO:0030687">
    <property type="term" value="C:preribosome, large subunit precursor"/>
    <property type="evidence" value="ECO:0007669"/>
    <property type="project" value="EnsemblFungi"/>
</dbReference>
<dbReference type="GO" id="GO:0005524">
    <property type="term" value="F:ATP binding"/>
    <property type="evidence" value="ECO:0007669"/>
    <property type="project" value="UniProtKB-KW"/>
</dbReference>
<dbReference type="GO" id="GO:0016887">
    <property type="term" value="F:ATP hydrolysis activity"/>
    <property type="evidence" value="ECO:0007669"/>
    <property type="project" value="RHEA"/>
</dbReference>
<dbReference type="GO" id="GO:0003723">
    <property type="term" value="F:RNA binding"/>
    <property type="evidence" value="ECO:0007669"/>
    <property type="project" value="UniProtKB-KW"/>
</dbReference>
<dbReference type="GO" id="GO:0003724">
    <property type="term" value="F:RNA helicase activity"/>
    <property type="evidence" value="ECO:0007669"/>
    <property type="project" value="UniProtKB-EC"/>
</dbReference>
<dbReference type="GO" id="GO:1902626">
    <property type="term" value="P:assembly of large subunit precursor of preribosome"/>
    <property type="evidence" value="ECO:0007669"/>
    <property type="project" value="EnsemblFungi"/>
</dbReference>
<dbReference type="GO" id="GO:0000470">
    <property type="term" value="P:maturation of LSU-rRNA"/>
    <property type="evidence" value="ECO:0007669"/>
    <property type="project" value="EnsemblFungi"/>
</dbReference>
<dbReference type="CDD" id="cd17960">
    <property type="entry name" value="DEADc_DDX55"/>
    <property type="match status" value="1"/>
</dbReference>
<dbReference type="CDD" id="cd18787">
    <property type="entry name" value="SF2_C_DEAD"/>
    <property type="match status" value="1"/>
</dbReference>
<dbReference type="Gene3D" id="3.40.50.300">
    <property type="entry name" value="P-loop containing nucleotide triphosphate hydrolases"/>
    <property type="match status" value="2"/>
</dbReference>
<dbReference type="InterPro" id="IPR011545">
    <property type="entry name" value="DEAD/DEAH_box_helicase_dom"/>
</dbReference>
<dbReference type="InterPro" id="IPR014001">
    <property type="entry name" value="Helicase_ATP-bd"/>
</dbReference>
<dbReference type="InterPro" id="IPR001650">
    <property type="entry name" value="Helicase_C-like"/>
</dbReference>
<dbReference type="InterPro" id="IPR027417">
    <property type="entry name" value="P-loop_NTPase"/>
</dbReference>
<dbReference type="InterPro" id="IPR000629">
    <property type="entry name" value="RNA-helicase_DEAD-box_CS"/>
</dbReference>
<dbReference type="InterPro" id="IPR014014">
    <property type="entry name" value="RNA_helicase_DEAD_Q_motif"/>
</dbReference>
<dbReference type="InterPro" id="IPR025313">
    <property type="entry name" value="SPB4-like_CTE"/>
</dbReference>
<dbReference type="PANTHER" id="PTHR24031">
    <property type="entry name" value="RNA HELICASE"/>
    <property type="match status" value="1"/>
</dbReference>
<dbReference type="Pfam" id="PF13959">
    <property type="entry name" value="CTE_SPB4"/>
    <property type="match status" value="1"/>
</dbReference>
<dbReference type="Pfam" id="PF00270">
    <property type="entry name" value="DEAD"/>
    <property type="match status" value="2"/>
</dbReference>
<dbReference type="Pfam" id="PF00271">
    <property type="entry name" value="Helicase_C"/>
    <property type="match status" value="1"/>
</dbReference>
<dbReference type="SMART" id="SM00487">
    <property type="entry name" value="DEXDc"/>
    <property type="match status" value="1"/>
</dbReference>
<dbReference type="SMART" id="SM01178">
    <property type="entry name" value="DUF4217"/>
    <property type="match status" value="1"/>
</dbReference>
<dbReference type="SMART" id="SM00490">
    <property type="entry name" value="HELICc"/>
    <property type="match status" value="1"/>
</dbReference>
<dbReference type="SUPFAM" id="SSF52540">
    <property type="entry name" value="P-loop containing nucleoside triphosphate hydrolases"/>
    <property type="match status" value="1"/>
</dbReference>
<dbReference type="PROSITE" id="PS00039">
    <property type="entry name" value="DEAD_ATP_HELICASE"/>
    <property type="match status" value="1"/>
</dbReference>
<dbReference type="PROSITE" id="PS51192">
    <property type="entry name" value="HELICASE_ATP_BIND_1"/>
    <property type="match status" value="1"/>
</dbReference>
<dbReference type="PROSITE" id="PS51194">
    <property type="entry name" value="HELICASE_CTER"/>
    <property type="match status" value="1"/>
</dbReference>
<dbReference type="PROSITE" id="PS51195">
    <property type="entry name" value="Q_MOTIF"/>
    <property type="match status" value="1"/>
</dbReference>
<evidence type="ECO:0000250" key="1">
    <source>
        <dbReference type="UniProtKB" id="P25808"/>
    </source>
</evidence>
<evidence type="ECO:0000255" key="2">
    <source>
        <dbReference type="PROSITE-ProRule" id="PRU00541"/>
    </source>
</evidence>
<evidence type="ECO:0000255" key="3">
    <source>
        <dbReference type="PROSITE-ProRule" id="PRU00542"/>
    </source>
</evidence>
<evidence type="ECO:0000256" key="4">
    <source>
        <dbReference type="SAM" id="MobiDB-lite"/>
    </source>
</evidence>
<evidence type="ECO:0000305" key="5"/>